<proteinExistence type="inferred from homology"/>
<feature type="chain" id="PRO_0000435380" description="C4-dicarboxylate TRAP transporter large permease protein DctM">
    <location>
        <begin position="1"/>
        <end position="453"/>
    </location>
</feature>
<feature type="transmembrane region" description="Helical" evidence="2">
    <location>
        <begin position="2"/>
        <end position="22"/>
    </location>
</feature>
<feature type="transmembrane region" description="Helical" evidence="2">
    <location>
        <begin position="50"/>
        <end position="70"/>
    </location>
</feature>
<feature type="transmembrane region" description="Helical" evidence="2">
    <location>
        <begin position="82"/>
        <end position="102"/>
    </location>
</feature>
<feature type="transmembrane region" description="Helical" evidence="2">
    <location>
        <begin position="104"/>
        <end position="124"/>
    </location>
</feature>
<feature type="transmembrane region" description="Helical" evidence="2">
    <location>
        <begin position="139"/>
        <end position="159"/>
    </location>
</feature>
<feature type="transmembrane region" description="Helical" evidence="2">
    <location>
        <begin position="172"/>
        <end position="192"/>
    </location>
</feature>
<feature type="transmembrane region" description="Helical" evidence="2">
    <location>
        <begin position="217"/>
        <end position="237"/>
    </location>
</feature>
<feature type="transmembrane region" description="Helical" evidence="2">
    <location>
        <begin position="243"/>
        <end position="263"/>
    </location>
</feature>
<feature type="transmembrane region" description="Helical" evidence="2">
    <location>
        <begin position="289"/>
        <end position="309"/>
    </location>
</feature>
<feature type="transmembrane region" description="Helical" evidence="2">
    <location>
        <begin position="326"/>
        <end position="346"/>
    </location>
</feature>
<feature type="transmembrane region" description="Helical" evidence="2">
    <location>
        <begin position="356"/>
        <end position="376"/>
    </location>
</feature>
<feature type="transmembrane region" description="Helical" evidence="2">
    <location>
        <begin position="380"/>
        <end position="400"/>
    </location>
</feature>
<feature type="transmembrane region" description="Helical" evidence="2">
    <location>
        <begin position="417"/>
        <end position="437"/>
    </location>
</feature>
<gene>
    <name evidence="3" type="primary">dctM</name>
    <name evidence="6" type="ordered locus">VC_1927</name>
</gene>
<dbReference type="EMBL" id="AE003852">
    <property type="protein sequence ID" value="AAF95075.1"/>
    <property type="molecule type" value="Genomic_DNA"/>
</dbReference>
<dbReference type="PIR" id="D82140">
    <property type="entry name" value="D82140"/>
</dbReference>
<dbReference type="RefSeq" id="NP_231561.1">
    <property type="nucleotide sequence ID" value="NC_002505.1"/>
</dbReference>
<dbReference type="RefSeq" id="WP_000257380.1">
    <property type="nucleotide sequence ID" value="NZ_LT906614.1"/>
</dbReference>
<dbReference type="SMR" id="Q9KQS1"/>
<dbReference type="STRING" id="243277.VC_1927"/>
<dbReference type="DNASU" id="2613556"/>
<dbReference type="EnsemblBacteria" id="AAF95075">
    <property type="protein sequence ID" value="AAF95075"/>
    <property type="gene ID" value="VC_1927"/>
</dbReference>
<dbReference type="KEGG" id="vch:VC_1927"/>
<dbReference type="PATRIC" id="fig|243277.26.peg.1844"/>
<dbReference type="eggNOG" id="COG1593">
    <property type="taxonomic scope" value="Bacteria"/>
</dbReference>
<dbReference type="HOGENOM" id="CLU_019824_4_1_6"/>
<dbReference type="Proteomes" id="UP000000584">
    <property type="component" value="Chromosome 1"/>
</dbReference>
<dbReference type="GO" id="GO:0005886">
    <property type="term" value="C:plasma membrane"/>
    <property type="evidence" value="ECO:0000318"/>
    <property type="project" value="GO_Central"/>
</dbReference>
<dbReference type="GO" id="GO:0022857">
    <property type="term" value="F:transmembrane transporter activity"/>
    <property type="evidence" value="ECO:0000318"/>
    <property type="project" value="GO_Central"/>
</dbReference>
<dbReference type="InterPro" id="IPR010656">
    <property type="entry name" value="DctM"/>
</dbReference>
<dbReference type="InterPro" id="IPR004681">
    <property type="entry name" value="TRAP_DctM"/>
</dbReference>
<dbReference type="NCBIfam" id="TIGR00786">
    <property type="entry name" value="dctM"/>
    <property type="match status" value="1"/>
</dbReference>
<dbReference type="PANTHER" id="PTHR33362:SF5">
    <property type="entry name" value="C4-DICARBOXYLATE TRAP TRANSPORTER LARGE PERMEASE PROTEIN DCTM"/>
    <property type="match status" value="1"/>
</dbReference>
<dbReference type="PANTHER" id="PTHR33362">
    <property type="entry name" value="SIALIC ACID TRAP TRANSPORTER PERMEASE PROTEIN SIAT-RELATED"/>
    <property type="match status" value="1"/>
</dbReference>
<dbReference type="Pfam" id="PF06808">
    <property type="entry name" value="DctM"/>
    <property type="match status" value="1"/>
</dbReference>
<dbReference type="PIRSF" id="PIRSF006066">
    <property type="entry name" value="HI0050"/>
    <property type="match status" value="1"/>
</dbReference>
<protein>
    <recommendedName>
        <fullName evidence="4">C4-dicarboxylate TRAP transporter large permease protein DctM</fullName>
    </recommendedName>
</protein>
<name>DCTM_VIBCH</name>
<sequence>MAVALLFILVIGMMIVGVPIAISLGLSSILFLLWHSDASLASVAQTLFNAFAGHYTLLAIPFFILASTFMSTGGVAKRIIRFAIAMVGWFRGGLAIASVVACMMFAALSGSSPATVVAIGSIVIAGMVKNGYSKEFAAGVICNAGTLGILIPPSIVMVVYSAATNVSVGRMFLGGVVPGLLAGLMLIIAIYITARIKNLPKQPFVGWKEALKAAKEASWGLLLVVIILGGIYGGIFTPTEAAAVAAVYSFFIANFIYRDMGPFADKTNTKPVLVKVVETFVHKDTKATLYDAGKLTIMLMFIIANALILKHVLTEERIPQMITESMLSAGLGPITFLIVVNLILLVGGQFMEPSGLLVIVAPLVFPIAIALGIDPIHLGIMMVVNMEIGMITPPVGLNLFVTSGVAKMSMMNVVKAALPWVGVMFLFLIIVTYVPWVSTWLPTLLMGPEIITR</sequence>
<accession>Q9KQS1</accession>
<evidence type="ECO:0000250" key="1">
    <source>
        <dbReference type="UniProtKB" id="O07838"/>
    </source>
</evidence>
<evidence type="ECO:0000255" key="2"/>
<evidence type="ECO:0000303" key="3">
    <source>
    </source>
</evidence>
<evidence type="ECO:0000305" key="4"/>
<evidence type="ECO:0000305" key="5">
    <source>
    </source>
</evidence>
<evidence type="ECO:0000312" key="6">
    <source>
        <dbReference type="EMBL" id="AAF95075.1"/>
    </source>
</evidence>
<organism>
    <name type="scientific">Vibrio cholerae serotype O1 (strain ATCC 39315 / El Tor Inaba N16961)</name>
    <dbReference type="NCBI Taxonomy" id="243277"/>
    <lineage>
        <taxon>Bacteria</taxon>
        <taxon>Pseudomonadati</taxon>
        <taxon>Pseudomonadota</taxon>
        <taxon>Gammaproteobacteria</taxon>
        <taxon>Vibrionales</taxon>
        <taxon>Vibrionaceae</taxon>
        <taxon>Vibrio</taxon>
    </lineage>
</organism>
<keyword id="KW-0997">Cell inner membrane</keyword>
<keyword id="KW-1003">Cell membrane</keyword>
<keyword id="KW-0472">Membrane</keyword>
<keyword id="KW-1185">Reference proteome</keyword>
<keyword id="KW-0812">Transmembrane</keyword>
<keyword id="KW-1133">Transmembrane helix</keyword>
<keyword id="KW-0813">Transport</keyword>
<comment type="function">
    <text evidence="5">Part of the tripartite ATP-independent periplasmic (TRAP) transport system DctPQM involved in C4-dicarboxylates uptake.</text>
</comment>
<comment type="subunit">
    <text evidence="1">The complex comprises the extracytoplasmic solute receptor protein DctP, and the two transmembrane proteins DctQ and DctM.</text>
</comment>
<comment type="subcellular location">
    <subcellularLocation>
        <location evidence="1">Cell inner membrane</location>
        <topology evidence="2">Multi-pass membrane protein</topology>
    </subcellularLocation>
</comment>
<comment type="similarity">
    <text evidence="4">Belongs to the TRAP transporter large permease family.</text>
</comment>
<reference key="1">
    <citation type="journal article" date="2000" name="Nature">
        <title>DNA sequence of both chromosomes of the cholera pathogen Vibrio cholerae.</title>
        <authorList>
            <person name="Heidelberg J.F."/>
            <person name="Eisen J.A."/>
            <person name="Nelson W.C."/>
            <person name="Clayton R.A."/>
            <person name="Gwinn M.L."/>
            <person name="Dodson R.J."/>
            <person name="Haft D.H."/>
            <person name="Hickey E.K."/>
            <person name="Peterson J.D."/>
            <person name="Umayam L.A."/>
            <person name="Gill S.R."/>
            <person name="Nelson K.E."/>
            <person name="Read T.D."/>
            <person name="Tettelin H."/>
            <person name="Richardson D.L."/>
            <person name="Ermolaeva M.D."/>
            <person name="Vamathevan J.J."/>
            <person name="Bass S."/>
            <person name="Qin H."/>
            <person name="Dragoi I."/>
            <person name="Sellers P."/>
            <person name="McDonald L.A."/>
            <person name="Utterback T.R."/>
            <person name="Fleischmann R.D."/>
            <person name="Nierman W.C."/>
            <person name="White O."/>
            <person name="Salzberg S.L."/>
            <person name="Smith H.O."/>
            <person name="Colwell R.R."/>
            <person name="Mekalanos J.J."/>
            <person name="Venter J.C."/>
            <person name="Fraser C.M."/>
        </authorList>
    </citation>
    <scope>NUCLEOTIDE SEQUENCE [LARGE SCALE GENOMIC DNA]</scope>
    <source>
        <strain>ATCC 39315 / El Tor Inaba N16961</strain>
    </source>
</reference>
<reference key="2">
    <citation type="journal article" date="2012" name="Microbiology">
        <title>The VC1777-VC1779 proteins are members of a sialic acid-specific subfamily of TRAP transporters (SiaPQM) and constitute the sole route of sialic acid uptake in the human pathogen Vibrio cholerae.</title>
        <authorList>
            <person name="Chowdhury N."/>
            <person name="Norris J."/>
            <person name="McAlister E."/>
            <person name="Lau S.Y."/>
            <person name="Thomas G.H."/>
            <person name="Boyd E.F."/>
        </authorList>
    </citation>
    <scope>PROBABLE FUNCTION</scope>
</reference>